<accession>Q2NT27</accession>
<organism>
    <name type="scientific">Sodalis glossinidius (strain morsitans)</name>
    <dbReference type="NCBI Taxonomy" id="343509"/>
    <lineage>
        <taxon>Bacteria</taxon>
        <taxon>Pseudomonadati</taxon>
        <taxon>Pseudomonadota</taxon>
        <taxon>Gammaproteobacteria</taxon>
        <taxon>Enterobacterales</taxon>
        <taxon>Bruguierivoracaceae</taxon>
        <taxon>Sodalis</taxon>
    </lineage>
</organism>
<gene>
    <name evidence="1" type="primary">pheT</name>
    <name type="ordered locus">SG1423</name>
</gene>
<comment type="catalytic activity">
    <reaction evidence="1">
        <text>tRNA(Phe) + L-phenylalanine + ATP = L-phenylalanyl-tRNA(Phe) + AMP + diphosphate + H(+)</text>
        <dbReference type="Rhea" id="RHEA:19413"/>
        <dbReference type="Rhea" id="RHEA-COMP:9668"/>
        <dbReference type="Rhea" id="RHEA-COMP:9699"/>
        <dbReference type="ChEBI" id="CHEBI:15378"/>
        <dbReference type="ChEBI" id="CHEBI:30616"/>
        <dbReference type="ChEBI" id="CHEBI:33019"/>
        <dbReference type="ChEBI" id="CHEBI:58095"/>
        <dbReference type="ChEBI" id="CHEBI:78442"/>
        <dbReference type="ChEBI" id="CHEBI:78531"/>
        <dbReference type="ChEBI" id="CHEBI:456215"/>
        <dbReference type="EC" id="6.1.1.20"/>
    </reaction>
</comment>
<comment type="cofactor">
    <cofactor evidence="1">
        <name>Mg(2+)</name>
        <dbReference type="ChEBI" id="CHEBI:18420"/>
    </cofactor>
    <text evidence="1">Binds 2 magnesium ions per tetramer.</text>
</comment>
<comment type="subunit">
    <text evidence="1">Tetramer of two alpha and two beta subunits.</text>
</comment>
<comment type="subcellular location">
    <subcellularLocation>
        <location evidence="1">Cytoplasm</location>
    </subcellularLocation>
</comment>
<comment type="similarity">
    <text evidence="1">Belongs to the phenylalanyl-tRNA synthetase beta subunit family. Type 1 subfamily.</text>
</comment>
<dbReference type="EC" id="6.1.1.20" evidence="1"/>
<dbReference type="EMBL" id="AP008232">
    <property type="protein sequence ID" value="BAE74698.1"/>
    <property type="molecule type" value="Genomic_DNA"/>
</dbReference>
<dbReference type="RefSeq" id="WP_011411243.1">
    <property type="nucleotide sequence ID" value="NC_007712.1"/>
</dbReference>
<dbReference type="SMR" id="Q2NT27"/>
<dbReference type="STRING" id="343509.SG1423"/>
<dbReference type="KEGG" id="sgl:SG1423"/>
<dbReference type="eggNOG" id="COG0072">
    <property type="taxonomic scope" value="Bacteria"/>
</dbReference>
<dbReference type="eggNOG" id="COG0073">
    <property type="taxonomic scope" value="Bacteria"/>
</dbReference>
<dbReference type="HOGENOM" id="CLU_016891_0_0_6"/>
<dbReference type="OrthoDB" id="9805455at2"/>
<dbReference type="BioCyc" id="SGLO343509:SGP1_RS12615-MONOMER"/>
<dbReference type="Proteomes" id="UP000001932">
    <property type="component" value="Chromosome"/>
</dbReference>
<dbReference type="GO" id="GO:0009328">
    <property type="term" value="C:phenylalanine-tRNA ligase complex"/>
    <property type="evidence" value="ECO:0007669"/>
    <property type="project" value="TreeGrafter"/>
</dbReference>
<dbReference type="GO" id="GO:0005524">
    <property type="term" value="F:ATP binding"/>
    <property type="evidence" value="ECO:0007669"/>
    <property type="project" value="UniProtKB-UniRule"/>
</dbReference>
<dbReference type="GO" id="GO:0000287">
    <property type="term" value="F:magnesium ion binding"/>
    <property type="evidence" value="ECO:0007669"/>
    <property type="project" value="UniProtKB-UniRule"/>
</dbReference>
<dbReference type="GO" id="GO:0004826">
    <property type="term" value="F:phenylalanine-tRNA ligase activity"/>
    <property type="evidence" value="ECO:0007669"/>
    <property type="project" value="UniProtKB-UniRule"/>
</dbReference>
<dbReference type="GO" id="GO:0000049">
    <property type="term" value="F:tRNA binding"/>
    <property type="evidence" value="ECO:0007669"/>
    <property type="project" value="UniProtKB-KW"/>
</dbReference>
<dbReference type="GO" id="GO:0006432">
    <property type="term" value="P:phenylalanyl-tRNA aminoacylation"/>
    <property type="evidence" value="ECO:0007669"/>
    <property type="project" value="UniProtKB-UniRule"/>
</dbReference>
<dbReference type="CDD" id="cd00769">
    <property type="entry name" value="PheRS_beta_core"/>
    <property type="match status" value="1"/>
</dbReference>
<dbReference type="CDD" id="cd02796">
    <property type="entry name" value="tRNA_bind_bactPheRS"/>
    <property type="match status" value="1"/>
</dbReference>
<dbReference type="FunFam" id="2.40.50.140:FF:000045">
    <property type="entry name" value="Phenylalanine--tRNA ligase beta subunit"/>
    <property type="match status" value="1"/>
</dbReference>
<dbReference type="FunFam" id="3.30.56.10:FF:000002">
    <property type="entry name" value="Phenylalanine--tRNA ligase beta subunit"/>
    <property type="match status" value="1"/>
</dbReference>
<dbReference type="FunFam" id="3.30.70.380:FF:000001">
    <property type="entry name" value="Phenylalanine--tRNA ligase beta subunit"/>
    <property type="match status" value="1"/>
</dbReference>
<dbReference type="FunFam" id="3.30.930.10:FF:000022">
    <property type="entry name" value="Phenylalanine--tRNA ligase beta subunit"/>
    <property type="match status" value="1"/>
</dbReference>
<dbReference type="FunFam" id="3.50.40.10:FF:000001">
    <property type="entry name" value="Phenylalanine--tRNA ligase beta subunit"/>
    <property type="match status" value="1"/>
</dbReference>
<dbReference type="Gene3D" id="3.30.56.10">
    <property type="match status" value="2"/>
</dbReference>
<dbReference type="Gene3D" id="3.30.930.10">
    <property type="entry name" value="Bira Bifunctional Protein, Domain 2"/>
    <property type="match status" value="1"/>
</dbReference>
<dbReference type="Gene3D" id="3.30.70.380">
    <property type="entry name" value="Ferrodoxin-fold anticodon-binding domain"/>
    <property type="match status" value="1"/>
</dbReference>
<dbReference type="Gene3D" id="2.40.50.140">
    <property type="entry name" value="Nucleic acid-binding proteins"/>
    <property type="match status" value="1"/>
</dbReference>
<dbReference type="Gene3D" id="3.50.40.10">
    <property type="entry name" value="Phenylalanyl-trna Synthetase, Chain B, domain 3"/>
    <property type="match status" value="1"/>
</dbReference>
<dbReference type="HAMAP" id="MF_00283">
    <property type="entry name" value="Phe_tRNA_synth_beta1"/>
    <property type="match status" value="1"/>
</dbReference>
<dbReference type="InterPro" id="IPR045864">
    <property type="entry name" value="aa-tRNA-synth_II/BPL/LPL"/>
</dbReference>
<dbReference type="InterPro" id="IPR005146">
    <property type="entry name" value="B3/B4_tRNA-bd"/>
</dbReference>
<dbReference type="InterPro" id="IPR009061">
    <property type="entry name" value="DNA-bd_dom_put_sf"/>
</dbReference>
<dbReference type="InterPro" id="IPR005121">
    <property type="entry name" value="Fdx_antiC-bd"/>
</dbReference>
<dbReference type="InterPro" id="IPR036690">
    <property type="entry name" value="Fdx_antiC-bd_sf"/>
</dbReference>
<dbReference type="InterPro" id="IPR012340">
    <property type="entry name" value="NA-bd_OB-fold"/>
</dbReference>
<dbReference type="InterPro" id="IPR045060">
    <property type="entry name" value="Phe-tRNA-ligase_IIc_bsu"/>
</dbReference>
<dbReference type="InterPro" id="IPR004532">
    <property type="entry name" value="Phe-tRNA-ligase_IIc_bsu_bact"/>
</dbReference>
<dbReference type="InterPro" id="IPR020825">
    <property type="entry name" value="Phe-tRNA_synthase-like_B3/B4"/>
</dbReference>
<dbReference type="InterPro" id="IPR041616">
    <property type="entry name" value="PheRS_beta_core"/>
</dbReference>
<dbReference type="InterPro" id="IPR002547">
    <property type="entry name" value="tRNA-bd_dom"/>
</dbReference>
<dbReference type="InterPro" id="IPR033714">
    <property type="entry name" value="tRNA_bind_bactPheRS"/>
</dbReference>
<dbReference type="InterPro" id="IPR005147">
    <property type="entry name" value="tRNA_synthase_B5-dom"/>
</dbReference>
<dbReference type="NCBIfam" id="TIGR00472">
    <property type="entry name" value="pheT_bact"/>
    <property type="match status" value="1"/>
</dbReference>
<dbReference type="NCBIfam" id="NF045760">
    <property type="entry name" value="YtpR"/>
    <property type="match status" value="1"/>
</dbReference>
<dbReference type="PANTHER" id="PTHR10947:SF0">
    <property type="entry name" value="PHENYLALANINE--TRNA LIGASE BETA SUBUNIT"/>
    <property type="match status" value="1"/>
</dbReference>
<dbReference type="PANTHER" id="PTHR10947">
    <property type="entry name" value="PHENYLALANYL-TRNA SYNTHETASE BETA CHAIN AND LEUCINE-RICH REPEAT-CONTAINING PROTEIN 47"/>
    <property type="match status" value="1"/>
</dbReference>
<dbReference type="Pfam" id="PF03483">
    <property type="entry name" value="B3_4"/>
    <property type="match status" value="1"/>
</dbReference>
<dbReference type="Pfam" id="PF03484">
    <property type="entry name" value="B5"/>
    <property type="match status" value="1"/>
</dbReference>
<dbReference type="Pfam" id="PF03147">
    <property type="entry name" value="FDX-ACB"/>
    <property type="match status" value="1"/>
</dbReference>
<dbReference type="Pfam" id="PF01588">
    <property type="entry name" value="tRNA_bind"/>
    <property type="match status" value="1"/>
</dbReference>
<dbReference type="Pfam" id="PF17759">
    <property type="entry name" value="tRNA_synthFbeta"/>
    <property type="match status" value="1"/>
</dbReference>
<dbReference type="SMART" id="SM00873">
    <property type="entry name" value="B3_4"/>
    <property type="match status" value="1"/>
</dbReference>
<dbReference type="SMART" id="SM00874">
    <property type="entry name" value="B5"/>
    <property type="match status" value="1"/>
</dbReference>
<dbReference type="SMART" id="SM00896">
    <property type="entry name" value="FDX-ACB"/>
    <property type="match status" value="1"/>
</dbReference>
<dbReference type="SUPFAM" id="SSF54991">
    <property type="entry name" value="Anticodon-binding domain of PheRS"/>
    <property type="match status" value="1"/>
</dbReference>
<dbReference type="SUPFAM" id="SSF55681">
    <property type="entry name" value="Class II aaRS and biotin synthetases"/>
    <property type="match status" value="1"/>
</dbReference>
<dbReference type="SUPFAM" id="SSF50249">
    <property type="entry name" value="Nucleic acid-binding proteins"/>
    <property type="match status" value="1"/>
</dbReference>
<dbReference type="SUPFAM" id="SSF56037">
    <property type="entry name" value="PheT/TilS domain"/>
    <property type="match status" value="1"/>
</dbReference>
<dbReference type="SUPFAM" id="SSF46955">
    <property type="entry name" value="Putative DNA-binding domain"/>
    <property type="match status" value="1"/>
</dbReference>
<dbReference type="PROSITE" id="PS51483">
    <property type="entry name" value="B5"/>
    <property type="match status" value="1"/>
</dbReference>
<dbReference type="PROSITE" id="PS51447">
    <property type="entry name" value="FDX_ACB"/>
    <property type="match status" value="1"/>
</dbReference>
<dbReference type="PROSITE" id="PS50886">
    <property type="entry name" value="TRBD"/>
    <property type="match status" value="1"/>
</dbReference>
<feature type="chain" id="PRO_0000232820" description="Phenylalanine--tRNA ligase beta subunit">
    <location>
        <begin position="1"/>
        <end position="795"/>
    </location>
</feature>
<feature type="domain" description="tRNA-binding" evidence="1">
    <location>
        <begin position="39"/>
        <end position="148"/>
    </location>
</feature>
<feature type="domain" description="B5" evidence="1">
    <location>
        <begin position="401"/>
        <end position="476"/>
    </location>
</feature>
<feature type="domain" description="FDX-ACB" evidence="1">
    <location>
        <begin position="701"/>
        <end position="794"/>
    </location>
</feature>
<feature type="binding site" evidence="1">
    <location>
        <position position="454"/>
    </location>
    <ligand>
        <name>Mg(2+)</name>
        <dbReference type="ChEBI" id="CHEBI:18420"/>
        <note>shared with alpha subunit</note>
    </ligand>
</feature>
<feature type="binding site" evidence="1">
    <location>
        <position position="460"/>
    </location>
    <ligand>
        <name>Mg(2+)</name>
        <dbReference type="ChEBI" id="CHEBI:18420"/>
        <note>shared with alpha subunit</note>
    </ligand>
</feature>
<feature type="binding site" evidence="1">
    <location>
        <position position="463"/>
    </location>
    <ligand>
        <name>Mg(2+)</name>
        <dbReference type="ChEBI" id="CHEBI:18420"/>
        <note>shared with alpha subunit</note>
    </ligand>
</feature>
<feature type="binding site" evidence="1">
    <location>
        <position position="464"/>
    </location>
    <ligand>
        <name>Mg(2+)</name>
        <dbReference type="ChEBI" id="CHEBI:18420"/>
        <note>shared with alpha subunit</note>
    </ligand>
</feature>
<name>SYFB_SODGM</name>
<keyword id="KW-0030">Aminoacyl-tRNA synthetase</keyword>
<keyword id="KW-0067">ATP-binding</keyword>
<keyword id="KW-0963">Cytoplasm</keyword>
<keyword id="KW-0436">Ligase</keyword>
<keyword id="KW-0460">Magnesium</keyword>
<keyword id="KW-0479">Metal-binding</keyword>
<keyword id="KW-0547">Nucleotide-binding</keyword>
<keyword id="KW-0648">Protein biosynthesis</keyword>
<keyword id="KW-0694">RNA-binding</keyword>
<keyword id="KW-0820">tRNA-binding</keyword>
<sequence length="795" mass="86961">MKFSELWLREWVNPAIDSEALVDQITMSGLEVDGVEPVAGRFTGVVVGRVVECRQHSNADKLRVTKVDVGGERLLDIVCGAPNCRAGLRVAVAMLGAVLPGDFKIKVAKLRGEPSEGMLCSFSELGITGDHDGIIELPAEAPIGQDIRDYLQLDDNTIDISVTPNRADCLGLLGIARDVAVRNRLPLHMPAIETVTPEISDTLPIRVDAVEACPRYLGRVVKNINVSAATPLWMKEKLRRCGLRSVDAVVDITNYVLLELGQPMHAFDRARIEGGIVVRHARQDETLTLLDGSDVTLSLDTLVIADHGQALAMAGIFGGGAYCISPTTRDVVLECAFFNPLAITGRARRYGLHTDASHRYERGVDPALQPRAMERATALLVAICGGQPGPVIDVTSASAQPQPATITLRRKTLDRLIGHVIPDEDVSDILTRLGCQVSRTAEGWQAVAPSWRFDMAIEEDLIEEVARVYGYDAIPNVPVRANLVMPHHREAALPLARVKTLLVDRGYQEAITYSFVDPKTQVLLHPQQAPLVLPSPISQDMSAMRLSLWTGLLGAVVYNQNRQQQRVRLFESGLRFVPDNAADLGIRQDLMLAGVIAGPRSDEHWDQLRQPVDFYDAKGDLEAILELTGKLDDIEFRAQRHPALHPGQSAAIYLNNEAIGFIGVIHPELEAKLNLNGCTLVFELLWEKVAERKVPEANDISRFPANRRDIAVVVADDVAVADIIAECKKVGANQLVGVNLFDVYRGRGVAEGFKSLAISLILQDTARTLEEEEIAATVAKCVAALKQRFQASLRD</sequence>
<reference key="1">
    <citation type="journal article" date="2006" name="Genome Res.">
        <title>Massive genome erosion and functional adaptations provide insights into the symbiotic lifestyle of Sodalis glossinidius in the tsetse host.</title>
        <authorList>
            <person name="Toh H."/>
            <person name="Weiss B.L."/>
            <person name="Perkin S.A.H."/>
            <person name="Yamashita A."/>
            <person name="Oshima K."/>
            <person name="Hattori M."/>
            <person name="Aksoy S."/>
        </authorList>
    </citation>
    <scope>NUCLEOTIDE SEQUENCE [LARGE SCALE GENOMIC DNA]</scope>
    <source>
        <strain>morsitans</strain>
    </source>
</reference>
<proteinExistence type="inferred from homology"/>
<evidence type="ECO:0000255" key="1">
    <source>
        <dbReference type="HAMAP-Rule" id="MF_00283"/>
    </source>
</evidence>
<protein>
    <recommendedName>
        <fullName evidence="1">Phenylalanine--tRNA ligase beta subunit</fullName>
        <ecNumber evidence="1">6.1.1.20</ecNumber>
    </recommendedName>
    <alternativeName>
        <fullName evidence="1">Phenylalanyl-tRNA synthetase beta subunit</fullName>
        <shortName evidence="1">PheRS</shortName>
    </alternativeName>
</protein>